<keyword id="KW-0325">Glycoprotein</keyword>
<keyword id="KW-1032">Host cell membrane</keyword>
<keyword id="KW-1043">Host membrane</keyword>
<keyword id="KW-0945">Host-virus interaction</keyword>
<keyword id="KW-0472">Membrane</keyword>
<keyword id="KW-1118">Modulation of host dendritic cell activity by virus</keyword>
<keyword id="KW-1185">Reference proteome</keyword>
<keyword id="KW-0964">Secreted</keyword>
<keyword id="KW-0812">Transmembrane</keyword>
<keyword id="KW-1133">Transmembrane helix</keyword>
<keyword id="KW-0899">Viral immunoevasion</keyword>
<comment type="function">
    <text evidence="1 4 5">Plays a role in modulating the host immune response and affecting host cytokine production. Structurally and functionally homolog of host CEACAM1, induces endothelial cell angiogenesis (PubMed:21670740). Ligands for host FLT3 receptor, activates the PI3K/AKT and MAPK/ERK pathways. In turn, triggers hematopoietic progenitor cell and monocyte differentiation leading to virus reactivation (PubMed:29691342).</text>
</comment>
<comment type="subunit">
    <text evidence="5">Interacts with host FLT3.</text>
</comment>
<comment type="subcellular location">
    <subcellularLocation>
        <location evidence="1">Secreted</location>
    </subcellularLocation>
    <subcellularLocation>
        <location evidence="4">Host cell membrane</location>
        <topology evidence="6">Single-pass membrane protein</topology>
    </subcellularLocation>
</comment>
<comment type="PTM">
    <text evidence="4">Highly glycosylated.</text>
</comment>
<comment type="similarity">
    <text evidence="3">Belongs to the RL11 family.</text>
</comment>
<organism>
    <name type="scientific">Human cytomegalovirus (strain AD169)</name>
    <name type="common">HHV-5</name>
    <name type="synonym">Human herpesvirus 5</name>
    <dbReference type="NCBI Taxonomy" id="10360"/>
    <lineage>
        <taxon>Viruses</taxon>
        <taxon>Duplodnaviria</taxon>
        <taxon>Heunggongvirae</taxon>
        <taxon>Peploviricota</taxon>
        <taxon>Herviviricetes</taxon>
        <taxon>Herpesvirales</taxon>
        <taxon>Orthoherpesviridae</taxon>
        <taxon>Betaherpesvirinae</taxon>
        <taxon>Cytomegalovirus</taxon>
        <taxon>Cytomegalovirus humanbeta5</taxon>
        <taxon>Human cytomegalovirus</taxon>
    </lineage>
</organism>
<sequence length="222" mass="24353">MASDVSSHLLTVTQSRWTIHHMYNKLLILALFTPVILESIIYVSGPQGGNVTLVSNFTSNISARWFRWDGNDSHLICFYKRGEGLSTPYVGLSLSCAANQITIFNLTLNDSGRYGAEGFTRSGENETFLWYNLTVKPKPLETTTASNVTTIVTTTPTVIGTKSNVTGNASLAPQLRAVAGFLNQTPRENNTHLALVGVIVFIALIVVCIMGWWKLLCSKPKL</sequence>
<feature type="chain" id="PRO_0000115304" description="CEACAM1-like protein UL7">
    <location>
        <begin position="1"/>
        <end position="222"/>
    </location>
</feature>
<feature type="transmembrane region" description="Helical" evidence="2">
    <location>
        <begin position="193"/>
        <end position="213"/>
    </location>
</feature>
<feature type="glycosylation site" description="N-linked (GlcNAc...) asparagine; by host" evidence="2">
    <location>
        <position position="50"/>
    </location>
</feature>
<feature type="glycosylation site" description="N-linked (GlcNAc...) asparagine; by host" evidence="2">
    <location>
        <position position="56"/>
    </location>
</feature>
<feature type="glycosylation site" description="N-linked (GlcNAc...) asparagine; by host" evidence="2">
    <location>
        <position position="60"/>
    </location>
</feature>
<feature type="glycosylation site" description="N-linked (GlcNAc...) asparagine; by host" evidence="2">
    <location>
        <position position="71"/>
    </location>
</feature>
<feature type="glycosylation site" description="N-linked (GlcNAc...) asparagine; by host" evidence="2">
    <location>
        <position position="105"/>
    </location>
</feature>
<feature type="glycosylation site" description="N-linked (GlcNAc...) asparagine; by host" evidence="2">
    <location>
        <position position="109"/>
    </location>
</feature>
<feature type="glycosylation site" description="N-linked (GlcNAc...) asparagine; by host" evidence="2">
    <location>
        <position position="125"/>
    </location>
</feature>
<feature type="glycosylation site" description="N-linked (GlcNAc...) asparagine; by host" evidence="2">
    <location>
        <position position="132"/>
    </location>
</feature>
<feature type="glycosylation site" description="N-linked (GlcNAc...) asparagine; by host" evidence="2">
    <location>
        <position position="147"/>
    </location>
</feature>
<feature type="glycosylation site" description="N-linked (GlcNAc...) asparagine; by host" evidence="2">
    <location>
        <position position="164"/>
    </location>
</feature>
<feature type="glycosylation site" description="N-linked (GlcNAc...) asparagine; by host" evidence="2">
    <location>
        <position position="168"/>
    </location>
</feature>
<feature type="glycosylation site" description="N-linked (GlcNAc...) asparagine; by host" evidence="2">
    <location>
        <position position="189"/>
    </location>
</feature>
<reference key="1">
    <citation type="journal article" date="1990" name="Curr. Top. Microbiol. Immunol.">
        <title>Analysis of the protein-coding content of the sequence of human cytomegalovirus strain AD169.</title>
        <authorList>
            <person name="Chee M.S."/>
            <person name="Bankier A.T."/>
            <person name="Beck S."/>
            <person name="Bohni R."/>
            <person name="Brown C.M."/>
            <person name="Cerny R."/>
            <person name="Horsnell T."/>
            <person name="Hutchison C.A. III"/>
            <person name="Kouzarides T."/>
            <person name="Martignetti J.A."/>
            <person name="Preddie E."/>
            <person name="Satchwell S.C."/>
            <person name="Tomlinson P."/>
            <person name="Weston K.M."/>
            <person name="Barrell B.G."/>
        </authorList>
    </citation>
    <scope>NUCLEOTIDE SEQUENCE [LARGE SCALE GENOMIC DNA]</scope>
</reference>
<reference key="2">
    <citation type="journal article" date="2003" name="J. Gen. Virol.">
        <title>The human cytomegalovirus genome revisited: comparison with the chimpanzee cytomegalovirus genome.</title>
        <authorList>
            <person name="Davison A.J."/>
            <person name="Dolan A."/>
            <person name="Akter P."/>
            <person name="Addison C."/>
            <person name="Dargan D.J."/>
            <person name="Alcendor D.J."/>
            <person name="McGeoch D.J."/>
            <person name="Hayward G.S."/>
        </authorList>
    </citation>
    <scope>GENOME REANNOTATION</scope>
</reference>
<reference key="3">
    <citation type="journal article" date="2003" name="J. Gen. Virol.">
        <authorList>
            <person name="Davison A.J."/>
            <person name="Dolan A."/>
            <person name="Akter P."/>
            <person name="Addison C."/>
            <person name="Dargan D.J."/>
            <person name="Alcendor D.J."/>
            <person name="McGeoch D.J."/>
            <person name="Hayward G.S."/>
        </authorList>
    </citation>
    <scope>ERRATUM OF PUBMED:12533697</scope>
</reference>
<reference key="4">
    <citation type="journal article" date="2003" name="J. Gen. Virol.">
        <title>Homology between the human cytomegalovirus RL11 gene family and human adenovirus E3 genes.</title>
        <authorList>
            <person name="Davison A.J."/>
            <person name="Akter P."/>
            <person name="Cunningham C."/>
            <person name="Dolan A."/>
            <person name="Addison C."/>
            <person name="Dargan D.J."/>
            <person name="Hassan-Walker A.F."/>
            <person name="Emery V.C."/>
            <person name="Griffiths P.D."/>
            <person name="Wilkinson G.W."/>
        </authorList>
    </citation>
    <scope>GENE FAMILY</scope>
</reference>
<reference key="5">
    <citation type="journal article" date="2011" name="Immunol. Cell Biol.">
        <title>Human cytomegalovirus UL7, a homologue of the SLAM-family receptor CD229, impairs cytokine production.</title>
        <authorList>
            <person name="Engel P."/>
            <person name="Perez-Carmona N."/>
            <person name="Alba M.M."/>
            <person name="Robertson K."/>
            <person name="Ghazal P."/>
            <person name="Angulo A."/>
        </authorList>
    </citation>
    <scope>FUNCTION</scope>
    <scope>SUBCELLULAR LOCATION</scope>
    <scope>GLYCOSYLATION</scope>
</reference>
<reference key="6">
    <citation type="journal article" date="2018" name="MBio">
        <title>Human Cytomegalovirus Encodes a Novel FLT3 Receptor Ligand Necessary for Hematopoietic Cell Differentiation and Viral Reactivation.</title>
        <authorList>
            <person name="Crawford L.B."/>
            <person name="Kim J.H."/>
            <person name="Collins-McMillen D."/>
            <person name="Lee B.J."/>
            <person name="Landais I."/>
            <person name="Held C."/>
            <person name="Nelson J.A."/>
            <person name="Yurochko A.D."/>
            <person name="Caposio P."/>
        </authorList>
    </citation>
    <scope>FUNCTION</scope>
    <scope>INTERACTION WITH HOST FLT3</scope>
</reference>
<name>UL07_HCMVA</name>
<gene>
    <name type="primary">UL7</name>
</gene>
<accession>P16743</accession>
<accession>Q7M6M3</accession>
<evidence type="ECO:0000250" key="1">
    <source>
        <dbReference type="UniProtKB" id="Q6SWC3"/>
    </source>
</evidence>
<evidence type="ECO:0000255" key="2"/>
<evidence type="ECO:0000269" key="3">
    <source>
    </source>
</evidence>
<evidence type="ECO:0000269" key="4">
    <source>
    </source>
</evidence>
<evidence type="ECO:0000269" key="5">
    <source>
    </source>
</evidence>
<evidence type="ECO:0000305" key="6"/>
<organismHost>
    <name type="scientific">Homo sapiens</name>
    <name type="common">Human</name>
    <dbReference type="NCBI Taxonomy" id="9606"/>
</organismHost>
<dbReference type="EMBL" id="X17403">
    <property type="protein sequence ID" value="CAA35440.1"/>
    <property type="molecule type" value="Genomic_DNA"/>
</dbReference>
<dbReference type="EMBL" id="BK000394">
    <property type="protein sequence ID" value="DAA00165.1"/>
    <property type="molecule type" value="Genomic_DNA"/>
</dbReference>
<dbReference type="PIR" id="S09770">
    <property type="entry name" value="S09770"/>
</dbReference>
<dbReference type="SMR" id="P16743"/>
<dbReference type="TCDB" id="9.B.410.2.5">
    <property type="family name" value="the viral e3 cr1 (e3-cr1) family"/>
</dbReference>
<dbReference type="GlyCosmos" id="P16743">
    <property type="glycosylation" value="12 sites, No reported glycans"/>
</dbReference>
<dbReference type="Proteomes" id="UP000008991">
    <property type="component" value="Segment"/>
</dbReference>
<dbReference type="Proteomes" id="UP000008992">
    <property type="component" value="Segment"/>
</dbReference>
<dbReference type="GO" id="GO:0005576">
    <property type="term" value="C:extracellular region"/>
    <property type="evidence" value="ECO:0007669"/>
    <property type="project" value="UniProtKB-SubCell"/>
</dbReference>
<dbReference type="GO" id="GO:0020002">
    <property type="term" value="C:host cell plasma membrane"/>
    <property type="evidence" value="ECO:0007669"/>
    <property type="project" value="UniProtKB-SubCell"/>
</dbReference>
<dbReference type="GO" id="GO:0016020">
    <property type="term" value="C:membrane"/>
    <property type="evidence" value="ECO:0007669"/>
    <property type="project" value="UniProtKB-KW"/>
</dbReference>
<dbReference type="GO" id="GO:0039673">
    <property type="term" value="P:symbiont-mediated suppression of host dendritic cell mediated immune response"/>
    <property type="evidence" value="ECO:0007669"/>
    <property type="project" value="UniProtKB-KW"/>
</dbReference>
<dbReference type="Gene3D" id="2.60.40.10">
    <property type="entry name" value="Immunoglobulins"/>
    <property type="match status" value="1"/>
</dbReference>
<dbReference type="InterPro" id="IPR036179">
    <property type="entry name" value="Ig-like_dom_sf"/>
</dbReference>
<dbReference type="InterPro" id="IPR013783">
    <property type="entry name" value="Ig-like_fold"/>
</dbReference>
<dbReference type="SUPFAM" id="SSF48726">
    <property type="entry name" value="Immunoglobulin"/>
    <property type="match status" value="1"/>
</dbReference>
<protein>
    <recommendedName>
        <fullName>CEACAM1-like protein UL7</fullName>
    </recommendedName>
</protein>
<proteinExistence type="evidence at protein level"/>